<dbReference type="EMBL" id="AJ400898">
    <property type="protein sequence ID" value="CAC81898.1"/>
    <property type="molecule type" value="mRNA"/>
</dbReference>
<dbReference type="EMBL" id="CP002685">
    <property type="protein sequence ID" value="AEC06675.1"/>
    <property type="molecule type" value="Genomic_DNA"/>
</dbReference>
<dbReference type="EMBL" id="AK118593">
    <property type="protein sequence ID" value="BAC43193.1"/>
    <property type="molecule type" value="mRNA"/>
</dbReference>
<dbReference type="RefSeq" id="NP_179364.2">
    <molecule id="Q8GT74-1"/>
    <property type="nucleotide sequence ID" value="NM_127327.4"/>
</dbReference>
<dbReference type="SMR" id="Q8GT74"/>
<dbReference type="BioGRID" id="1639">
    <property type="interactions" value="1"/>
</dbReference>
<dbReference type="DIP" id="DIP-40180N"/>
<dbReference type="FunCoup" id="Q8GT74">
    <property type="interactions" value="311"/>
</dbReference>
<dbReference type="IntAct" id="Q8GT74">
    <property type="interactions" value="1"/>
</dbReference>
<dbReference type="STRING" id="3702.Q8GT74"/>
<dbReference type="PaxDb" id="3702-AT2G17730.2"/>
<dbReference type="EnsemblPlants" id="AT2G17730.1">
    <molecule id="Q8GT74-1"/>
    <property type="protein sequence ID" value="AT2G17730.1"/>
    <property type="gene ID" value="AT2G17730"/>
</dbReference>
<dbReference type="GeneID" id="816282"/>
<dbReference type="Gramene" id="AT2G17730.1">
    <molecule id="Q8GT74-1"/>
    <property type="protein sequence ID" value="AT2G17730.1"/>
    <property type="gene ID" value="AT2G17730"/>
</dbReference>
<dbReference type="KEGG" id="ath:AT2G17730"/>
<dbReference type="Araport" id="AT2G17730"/>
<dbReference type="TAIR" id="AT2G17730">
    <property type="gene designation" value="NIP2"/>
</dbReference>
<dbReference type="eggNOG" id="KOG0800">
    <property type="taxonomic scope" value="Eukaryota"/>
</dbReference>
<dbReference type="HOGENOM" id="CLU_013137_2_1_1"/>
<dbReference type="InParanoid" id="Q8GT74"/>
<dbReference type="OMA" id="VWTILNM"/>
<dbReference type="OrthoDB" id="8062037at2759"/>
<dbReference type="PhylomeDB" id="Q8GT74"/>
<dbReference type="PRO" id="PR:Q8GT74"/>
<dbReference type="Proteomes" id="UP000006548">
    <property type="component" value="Chromosome 2"/>
</dbReference>
<dbReference type="ExpressionAtlas" id="Q8GT74">
    <property type="expression patterns" value="baseline and differential"/>
</dbReference>
<dbReference type="GO" id="GO:0009535">
    <property type="term" value="C:chloroplast thylakoid membrane"/>
    <property type="evidence" value="ECO:0007669"/>
    <property type="project" value="UniProtKB-SubCell"/>
</dbReference>
<dbReference type="GO" id="GO:0008270">
    <property type="term" value="F:zinc ion binding"/>
    <property type="evidence" value="ECO:0007669"/>
    <property type="project" value="UniProtKB-KW"/>
</dbReference>
<dbReference type="CDD" id="cd23119">
    <property type="entry name" value="RING-H2_NIPL1-like"/>
    <property type="match status" value="1"/>
</dbReference>
<dbReference type="FunFam" id="3.30.40.10:FF:000505">
    <property type="entry name" value="NEP1-interacting protein-like 1"/>
    <property type="match status" value="1"/>
</dbReference>
<dbReference type="Gene3D" id="3.30.40.10">
    <property type="entry name" value="Zinc/RING finger domain, C3HC4 (zinc finger)"/>
    <property type="match status" value="1"/>
</dbReference>
<dbReference type="InterPro" id="IPR027367">
    <property type="entry name" value="Gly-zipper_YMGG"/>
</dbReference>
<dbReference type="InterPro" id="IPR001841">
    <property type="entry name" value="Znf_RING"/>
</dbReference>
<dbReference type="InterPro" id="IPR013083">
    <property type="entry name" value="Znf_RING/FYVE/PHD"/>
</dbReference>
<dbReference type="PANTHER" id="PTHR46151:SF30">
    <property type="entry name" value="NEP1-INTERACTING PROTEIN 2"/>
    <property type="match status" value="1"/>
</dbReference>
<dbReference type="PANTHER" id="PTHR46151">
    <property type="entry name" value="NEP1-INTERACTING PROTEIN-LIKE 2"/>
    <property type="match status" value="1"/>
</dbReference>
<dbReference type="Pfam" id="PF13441">
    <property type="entry name" value="Gly-zipper_YMGG"/>
    <property type="match status" value="1"/>
</dbReference>
<dbReference type="Pfam" id="PF13639">
    <property type="entry name" value="zf-RING_2"/>
    <property type="match status" value="1"/>
</dbReference>
<dbReference type="SMART" id="SM00184">
    <property type="entry name" value="RING"/>
    <property type="match status" value="1"/>
</dbReference>
<dbReference type="SUPFAM" id="SSF57850">
    <property type="entry name" value="RING/U-box"/>
    <property type="match status" value="1"/>
</dbReference>
<dbReference type="PROSITE" id="PS50089">
    <property type="entry name" value="ZF_RING_2"/>
    <property type="match status" value="1"/>
</dbReference>
<sequence>MASSSSSSYRFQSGSYPLSSSPSLGNFVERIKDACHFLVSAVLGTIISAILTFFFALVGTLLGALTGALIGQETESGFIRGAAIGAISGAVFSIEVFESSLDLWKSDESGFGCFLYLIDVIVSLLSGRLVRERIGPAMLSAVQSQMGAVDTAFDDHTSLFDTGGSKGLTGDLVEKIPKMTITGNNNTDASENTDSCSVCLQDFQLGETVRSLPHCHHMFHLPCIDNWLLRHGSCPMCRRDI</sequence>
<feature type="chain" id="PRO_0000055776" description="NEP1-interacting protein 2">
    <location>
        <begin position="1"/>
        <end position="241"/>
    </location>
</feature>
<feature type="topological domain" description="Lumenal, thylakoid" evidence="1">
    <location>
        <begin position="1"/>
        <end position="36"/>
    </location>
</feature>
<feature type="transmembrane region" description="Helical" evidence="1">
    <location>
        <begin position="37"/>
        <end position="57"/>
    </location>
</feature>
<feature type="topological domain" description="Stromal" evidence="1">
    <location>
        <begin position="58"/>
        <end position="76"/>
    </location>
</feature>
<feature type="transmembrane region" description="Helical" evidence="1">
    <location>
        <begin position="77"/>
        <end position="97"/>
    </location>
</feature>
<feature type="topological domain" description="Lumenal, thylakoid" evidence="1">
    <location>
        <begin position="98"/>
        <end position="109"/>
    </location>
</feature>
<feature type="transmembrane region" description="Helical" evidence="1">
    <location>
        <begin position="110"/>
        <end position="130"/>
    </location>
</feature>
<feature type="topological domain" description="Stromal" evidence="1">
    <location>
        <begin position="131"/>
        <end position="241"/>
    </location>
</feature>
<feature type="zinc finger region" description="RING-type; atypical" evidence="2">
    <location>
        <begin position="196"/>
        <end position="238"/>
    </location>
</feature>
<feature type="region of interest" description="Disordered" evidence="3">
    <location>
        <begin position="1"/>
        <end position="20"/>
    </location>
</feature>
<feature type="sequence conflict" description="In Ref. 4; BAC43193." evidence="5" ref="4">
    <original>G</original>
    <variation>A</variation>
    <location>
        <position position="44"/>
    </location>
</feature>
<evidence type="ECO:0000255" key="1"/>
<evidence type="ECO:0000255" key="2">
    <source>
        <dbReference type="PROSITE-ProRule" id="PRU00175"/>
    </source>
</evidence>
<evidence type="ECO:0000256" key="3">
    <source>
        <dbReference type="SAM" id="MobiDB-lite"/>
    </source>
</evidence>
<evidence type="ECO:0000269" key="4">
    <source>
    </source>
</evidence>
<evidence type="ECO:0000305" key="5"/>
<evidence type="ECO:0000305" key="6">
    <source>
    </source>
</evidence>
<accession>Q8GT74</accession>
<accession>Q8GWW3</accession>
<keyword id="KW-0025">Alternative splicing</keyword>
<keyword id="KW-0150">Chloroplast</keyword>
<keyword id="KW-0472">Membrane</keyword>
<keyword id="KW-0479">Metal-binding</keyword>
<keyword id="KW-0934">Plastid</keyword>
<keyword id="KW-1185">Reference proteome</keyword>
<keyword id="KW-0793">Thylakoid</keyword>
<keyword id="KW-0812">Transmembrane</keyword>
<keyword id="KW-1133">Transmembrane helix</keyword>
<keyword id="KW-0862">Zinc</keyword>
<keyword id="KW-0863">Zinc-finger</keyword>
<protein>
    <recommendedName>
        <fullName>NEP1-interacting protein 2</fullName>
    </recommendedName>
    <alternativeName>
        <fullName>RING-H2 finger protein ATL25</fullName>
    </alternativeName>
</protein>
<gene>
    <name type="primary">NIP2</name>
    <name type="synonym">ATL25</name>
    <name type="ordered locus">At2g17730</name>
    <name type="ORF">T17A5.9</name>
</gene>
<reference key="1">
    <citation type="submission" date="2000-05" db="EMBL/GenBank/DDBJ databases">
        <title>Characterization of NEP-1 interacting transcription factors.</title>
        <authorList>
            <person name="Hakimi M.A."/>
            <person name="Lagrange T."/>
            <person name="Lerbs-Mache S."/>
        </authorList>
    </citation>
    <scope>NUCLEOTIDE SEQUENCE [MRNA]</scope>
    <source>
        <strain>cv. C24</strain>
    </source>
</reference>
<reference key="2">
    <citation type="journal article" date="1999" name="Nature">
        <title>Sequence and analysis of chromosome 2 of the plant Arabidopsis thaliana.</title>
        <authorList>
            <person name="Lin X."/>
            <person name="Kaul S."/>
            <person name="Rounsley S.D."/>
            <person name="Shea T.P."/>
            <person name="Benito M.-I."/>
            <person name="Town C.D."/>
            <person name="Fujii C.Y."/>
            <person name="Mason T.M."/>
            <person name="Bowman C.L."/>
            <person name="Barnstead M.E."/>
            <person name="Feldblyum T.V."/>
            <person name="Buell C.R."/>
            <person name="Ketchum K.A."/>
            <person name="Lee J.J."/>
            <person name="Ronning C.M."/>
            <person name="Koo H.L."/>
            <person name="Moffat K.S."/>
            <person name="Cronin L.A."/>
            <person name="Shen M."/>
            <person name="Pai G."/>
            <person name="Van Aken S."/>
            <person name="Umayam L."/>
            <person name="Tallon L.J."/>
            <person name="Gill J.E."/>
            <person name="Adams M.D."/>
            <person name="Carrera A.J."/>
            <person name="Creasy T.H."/>
            <person name="Goodman H.M."/>
            <person name="Somerville C.R."/>
            <person name="Copenhaver G.P."/>
            <person name="Preuss D."/>
            <person name="Nierman W.C."/>
            <person name="White O."/>
            <person name="Eisen J.A."/>
            <person name="Salzberg S.L."/>
            <person name="Fraser C.M."/>
            <person name="Venter J.C."/>
        </authorList>
    </citation>
    <scope>NUCLEOTIDE SEQUENCE [LARGE SCALE GENOMIC DNA]</scope>
    <source>
        <strain>cv. Columbia</strain>
    </source>
</reference>
<reference key="3">
    <citation type="journal article" date="2017" name="Plant J.">
        <title>Araport11: a complete reannotation of the Arabidopsis thaliana reference genome.</title>
        <authorList>
            <person name="Cheng C.Y."/>
            <person name="Krishnakumar V."/>
            <person name="Chan A.P."/>
            <person name="Thibaud-Nissen F."/>
            <person name="Schobel S."/>
            <person name="Town C.D."/>
        </authorList>
    </citation>
    <scope>GENOME REANNOTATION</scope>
    <source>
        <strain>cv. Columbia</strain>
    </source>
</reference>
<reference key="4">
    <citation type="journal article" date="2002" name="Science">
        <title>Functional annotation of a full-length Arabidopsis cDNA collection.</title>
        <authorList>
            <person name="Seki M."/>
            <person name="Narusaka M."/>
            <person name="Kamiya A."/>
            <person name="Ishida J."/>
            <person name="Satou M."/>
            <person name="Sakurai T."/>
            <person name="Nakajima M."/>
            <person name="Enju A."/>
            <person name="Akiyama K."/>
            <person name="Oono Y."/>
            <person name="Muramatsu M."/>
            <person name="Hayashizaki Y."/>
            <person name="Kawai J."/>
            <person name="Carninci P."/>
            <person name="Itoh M."/>
            <person name="Ishii Y."/>
            <person name="Arakawa T."/>
            <person name="Shibata K."/>
            <person name="Shinagawa A."/>
            <person name="Shinozaki K."/>
        </authorList>
    </citation>
    <scope>NUCLEOTIDE SEQUENCE [LARGE SCALE MRNA]</scope>
    <source>
        <strain>cv. Columbia</strain>
    </source>
</reference>
<reference key="5">
    <citation type="journal article" date="2002" name="Genome Biol.">
        <title>Evaluation and classification of RING-finger domains encoded by the Arabidopsis genome.</title>
        <authorList>
            <person name="Kosarev P."/>
            <person name="Mayer K.F.X."/>
            <person name="Hardtke C.S."/>
        </authorList>
    </citation>
    <scope>GENE FAMILY ORGANIZATION</scope>
</reference>
<reference key="6">
    <citation type="journal article" date="2006" name="J. Mol. Evol.">
        <title>The ATL gene family from Arabidopsis thaliana and Oryza sativa comprises a large number of putative ubiquitin ligases of the RING-H2 type.</title>
        <authorList>
            <person name="Serrano M."/>
            <person name="Parra S."/>
            <person name="Alcaraz L.D."/>
            <person name="Guzman P."/>
        </authorList>
    </citation>
    <scope>NOMENCLATURE</scope>
    <scope>GENE FAMILY ORGANIZATION</scope>
</reference>
<reference key="7">
    <citation type="journal article" date="2008" name="Proc. Natl. Acad. Sci. U.S.A.">
        <title>Intraplastidial trafficking of a phage-type RNA polymerase is mediated by a thylakoid RING-H2 protein.</title>
        <authorList>
            <person name="Azevedo J."/>
            <person name="Courtois F."/>
            <person name="Hakimi M.A."/>
            <person name="Demarsy E."/>
            <person name="Lagrange T."/>
            <person name="Alcaraz J.P."/>
            <person name="Jaiswal P."/>
            <person name="Marechal-Drouard L."/>
            <person name="Lerbs-Mache S."/>
        </authorList>
    </citation>
    <scope>SUBCELLULAR LOCATION</scope>
    <scope>FUNCTION</scope>
    <scope>INTERACTION WITH RPOT2</scope>
</reference>
<organism>
    <name type="scientific">Arabidopsis thaliana</name>
    <name type="common">Mouse-ear cress</name>
    <dbReference type="NCBI Taxonomy" id="3702"/>
    <lineage>
        <taxon>Eukaryota</taxon>
        <taxon>Viridiplantae</taxon>
        <taxon>Streptophyta</taxon>
        <taxon>Embryophyta</taxon>
        <taxon>Tracheophyta</taxon>
        <taxon>Spermatophyta</taxon>
        <taxon>Magnoliopsida</taxon>
        <taxon>eudicotyledons</taxon>
        <taxon>Gunneridae</taxon>
        <taxon>Pentapetalae</taxon>
        <taxon>rosids</taxon>
        <taxon>malvids</taxon>
        <taxon>Brassicales</taxon>
        <taxon>Brassicaceae</taxon>
        <taxon>Camelineae</taxon>
        <taxon>Arabidopsis</taxon>
    </lineage>
</organism>
<name>NIP2_ARATH</name>
<comment type="function">
    <text evidence="4">Intrinsic thylakoid membrane protein that fixes RPOT2 on the stromal side of the thylakoid membrane.</text>
</comment>
<comment type="subunit">
    <text evidence="4">Interacts with RPOT2.</text>
</comment>
<comment type="subcellular location">
    <subcellularLocation>
        <location evidence="4">Plastid</location>
        <location evidence="4">Chloroplast thylakoid membrane</location>
        <topology evidence="4">Multi-pass membrane protein</topology>
    </subcellularLocation>
</comment>
<comment type="alternative products">
    <event type="alternative splicing"/>
    <isoform>
        <id>Q8GT74-1</id>
        <name>1</name>
        <sequence type="displayed"/>
    </isoform>
    <text>A number of isoforms are produced. According to EST sequences.</text>
</comment>
<comment type="similarity">
    <text evidence="5">Belongs to the RING-type zinc finger family. NIP subfamily.</text>
</comment>
<comment type="caution">
    <text evidence="6">Was originally assigned as a member of the E3 ubiquitin-protein ligase ATL subfamily.</text>
</comment>
<proteinExistence type="evidence at protein level"/>